<keyword id="KW-1185">Reference proteome</keyword>
<keyword id="KW-0687">Ribonucleoprotein</keyword>
<keyword id="KW-0689">Ribosomal protein</keyword>
<keyword id="KW-0694">RNA-binding</keyword>
<keyword id="KW-0699">rRNA-binding</keyword>
<keyword id="KW-0820">tRNA-binding</keyword>
<name>RL5_CITBB</name>
<protein>
    <recommendedName>
        <fullName evidence="1">Large ribosomal subunit protein uL5</fullName>
    </recommendedName>
    <alternativeName>
        <fullName evidence="2">50S ribosomal protein L5</fullName>
    </alternativeName>
</protein>
<proteinExistence type="inferred from homology"/>
<reference key="1">
    <citation type="submission" date="2008-07" db="EMBL/GenBank/DDBJ databases">
        <title>Complete sequence of Geobacter bemidjiensis BEM.</title>
        <authorList>
            <consortium name="US DOE Joint Genome Institute"/>
            <person name="Lucas S."/>
            <person name="Copeland A."/>
            <person name="Lapidus A."/>
            <person name="Glavina del Rio T."/>
            <person name="Dalin E."/>
            <person name="Tice H."/>
            <person name="Bruce D."/>
            <person name="Goodwin L."/>
            <person name="Pitluck S."/>
            <person name="Kiss H."/>
            <person name="Brettin T."/>
            <person name="Detter J.C."/>
            <person name="Han C."/>
            <person name="Kuske C.R."/>
            <person name="Schmutz J."/>
            <person name="Larimer F."/>
            <person name="Land M."/>
            <person name="Hauser L."/>
            <person name="Kyrpides N."/>
            <person name="Lykidis A."/>
            <person name="Lovley D."/>
            <person name="Richardson P."/>
        </authorList>
    </citation>
    <scope>NUCLEOTIDE SEQUENCE [LARGE SCALE GENOMIC DNA]</scope>
    <source>
        <strain>ATCC BAA-1014 / DSM 16622 / JCM 12645 / Bem</strain>
    </source>
</reference>
<sequence length="179" mass="19874">MARLAELYNKEMVPALMKDQNYKNIMEVPKLVKIVVNMGLGEAIQNVKILDSAAEELAAITGQRPVITKAKKSIAGFKLRQGMPIGCAVTLRREKMYEFLDRLVSVSLPRVRDFKGISGKAFDGKGNYSLGVKEQLIFPEIDYDKVDKIKGLNITIVTTAKTDAEGKALLKLMGLPFRN</sequence>
<accession>B5EFR2</accession>
<evidence type="ECO:0000255" key="1">
    <source>
        <dbReference type="HAMAP-Rule" id="MF_01333"/>
    </source>
</evidence>
<evidence type="ECO:0000305" key="2"/>
<feature type="chain" id="PRO_1000142405" description="Large ribosomal subunit protein uL5">
    <location>
        <begin position="1"/>
        <end position="179"/>
    </location>
</feature>
<organism>
    <name type="scientific">Citrifermentans bemidjiense (strain ATCC BAA-1014 / DSM 16622 / JCM 12645 / Bem)</name>
    <name type="common">Geobacter bemidjiensis</name>
    <dbReference type="NCBI Taxonomy" id="404380"/>
    <lineage>
        <taxon>Bacteria</taxon>
        <taxon>Pseudomonadati</taxon>
        <taxon>Thermodesulfobacteriota</taxon>
        <taxon>Desulfuromonadia</taxon>
        <taxon>Geobacterales</taxon>
        <taxon>Geobacteraceae</taxon>
        <taxon>Citrifermentans</taxon>
    </lineage>
</organism>
<comment type="function">
    <text evidence="1">This is one of the proteins that bind and probably mediate the attachment of the 5S RNA into the large ribosomal subunit, where it forms part of the central protuberance. In the 70S ribosome it contacts protein S13 of the 30S subunit (bridge B1b), connecting the 2 subunits; this bridge is implicated in subunit movement. Contacts the P site tRNA; the 5S rRNA and some of its associated proteins might help stabilize positioning of ribosome-bound tRNAs.</text>
</comment>
<comment type="subunit">
    <text evidence="1">Part of the 50S ribosomal subunit; part of the 5S rRNA/L5/L18/L25 subcomplex. Contacts the 5S rRNA and the P site tRNA. Forms a bridge to the 30S subunit in the 70S ribosome.</text>
</comment>
<comment type="similarity">
    <text evidence="1">Belongs to the universal ribosomal protein uL5 family.</text>
</comment>
<gene>
    <name evidence="1" type="primary">rplE</name>
    <name type="ordered locus">Gbem_0945</name>
</gene>
<dbReference type="EMBL" id="CP001124">
    <property type="protein sequence ID" value="ACH37966.1"/>
    <property type="molecule type" value="Genomic_DNA"/>
</dbReference>
<dbReference type="RefSeq" id="WP_012529378.1">
    <property type="nucleotide sequence ID" value="NC_011146.1"/>
</dbReference>
<dbReference type="SMR" id="B5EFR2"/>
<dbReference type="STRING" id="404380.Gbem_0945"/>
<dbReference type="KEGG" id="gbm:Gbem_0945"/>
<dbReference type="eggNOG" id="COG0094">
    <property type="taxonomic scope" value="Bacteria"/>
</dbReference>
<dbReference type="HOGENOM" id="CLU_061015_2_1_7"/>
<dbReference type="OrthoDB" id="9806626at2"/>
<dbReference type="Proteomes" id="UP000008825">
    <property type="component" value="Chromosome"/>
</dbReference>
<dbReference type="GO" id="GO:1990904">
    <property type="term" value="C:ribonucleoprotein complex"/>
    <property type="evidence" value="ECO:0007669"/>
    <property type="project" value="UniProtKB-KW"/>
</dbReference>
<dbReference type="GO" id="GO:0005840">
    <property type="term" value="C:ribosome"/>
    <property type="evidence" value="ECO:0007669"/>
    <property type="project" value="UniProtKB-KW"/>
</dbReference>
<dbReference type="GO" id="GO:0019843">
    <property type="term" value="F:rRNA binding"/>
    <property type="evidence" value="ECO:0007669"/>
    <property type="project" value="UniProtKB-UniRule"/>
</dbReference>
<dbReference type="GO" id="GO:0003735">
    <property type="term" value="F:structural constituent of ribosome"/>
    <property type="evidence" value="ECO:0007669"/>
    <property type="project" value="InterPro"/>
</dbReference>
<dbReference type="GO" id="GO:0000049">
    <property type="term" value="F:tRNA binding"/>
    <property type="evidence" value="ECO:0007669"/>
    <property type="project" value="UniProtKB-UniRule"/>
</dbReference>
<dbReference type="GO" id="GO:0006412">
    <property type="term" value="P:translation"/>
    <property type="evidence" value="ECO:0007669"/>
    <property type="project" value="UniProtKB-UniRule"/>
</dbReference>
<dbReference type="FunFam" id="3.30.1440.10:FF:000001">
    <property type="entry name" value="50S ribosomal protein L5"/>
    <property type="match status" value="1"/>
</dbReference>
<dbReference type="Gene3D" id="3.30.1440.10">
    <property type="match status" value="1"/>
</dbReference>
<dbReference type="HAMAP" id="MF_01333_B">
    <property type="entry name" value="Ribosomal_uL5_B"/>
    <property type="match status" value="1"/>
</dbReference>
<dbReference type="InterPro" id="IPR002132">
    <property type="entry name" value="Ribosomal_uL5"/>
</dbReference>
<dbReference type="InterPro" id="IPR020930">
    <property type="entry name" value="Ribosomal_uL5_bac-type"/>
</dbReference>
<dbReference type="InterPro" id="IPR031309">
    <property type="entry name" value="Ribosomal_uL5_C"/>
</dbReference>
<dbReference type="InterPro" id="IPR020929">
    <property type="entry name" value="Ribosomal_uL5_CS"/>
</dbReference>
<dbReference type="InterPro" id="IPR022803">
    <property type="entry name" value="Ribosomal_uL5_dom_sf"/>
</dbReference>
<dbReference type="InterPro" id="IPR031310">
    <property type="entry name" value="Ribosomal_uL5_N"/>
</dbReference>
<dbReference type="NCBIfam" id="NF000585">
    <property type="entry name" value="PRK00010.1"/>
    <property type="match status" value="1"/>
</dbReference>
<dbReference type="PANTHER" id="PTHR11994">
    <property type="entry name" value="60S RIBOSOMAL PROTEIN L11-RELATED"/>
    <property type="match status" value="1"/>
</dbReference>
<dbReference type="Pfam" id="PF00281">
    <property type="entry name" value="Ribosomal_L5"/>
    <property type="match status" value="1"/>
</dbReference>
<dbReference type="Pfam" id="PF00673">
    <property type="entry name" value="Ribosomal_L5_C"/>
    <property type="match status" value="1"/>
</dbReference>
<dbReference type="PIRSF" id="PIRSF002161">
    <property type="entry name" value="Ribosomal_L5"/>
    <property type="match status" value="1"/>
</dbReference>
<dbReference type="SUPFAM" id="SSF55282">
    <property type="entry name" value="RL5-like"/>
    <property type="match status" value="1"/>
</dbReference>
<dbReference type="PROSITE" id="PS00358">
    <property type="entry name" value="RIBOSOMAL_L5"/>
    <property type="match status" value="1"/>
</dbReference>